<evidence type="ECO:0000255" key="1">
    <source>
        <dbReference type="HAMAP-Rule" id="MF_01367"/>
    </source>
</evidence>
<evidence type="ECO:0000305" key="2"/>
<protein>
    <recommendedName>
        <fullName evidence="1">Large ribosomal subunit protein uL14</fullName>
    </recommendedName>
    <alternativeName>
        <fullName evidence="2">50S ribosomal protein L14</fullName>
    </alternativeName>
</protein>
<proteinExistence type="inferred from homology"/>
<accession>Q72CH0</accession>
<reference key="1">
    <citation type="journal article" date="2004" name="Nat. Biotechnol.">
        <title>The genome sequence of the anaerobic, sulfate-reducing bacterium Desulfovibrio vulgaris Hildenborough.</title>
        <authorList>
            <person name="Heidelberg J.F."/>
            <person name="Seshadri R."/>
            <person name="Haveman S.A."/>
            <person name="Hemme C.L."/>
            <person name="Paulsen I.T."/>
            <person name="Kolonay J.F."/>
            <person name="Eisen J.A."/>
            <person name="Ward N.L."/>
            <person name="Methe B.A."/>
            <person name="Brinkac L.M."/>
            <person name="Daugherty S.C."/>
            <person name="DeBoy R.T."/>
            <person name="Dodson R.J."/>
            <person name="Durkin A.S."/>
            <person name="Madupu R."/>
            <person name="Nelson W.C."/>
            <person name="Sullivan S.A."/>
            <person name="Fouts D.E."/>
            <person name="Haft D.H."/>
            <person name="Selengut J."/>
            <person name="Peterson J.D."/>
            <person name="Davidsen T.M."/>
            <person name="Zafar N."/>
            <person name="Zhou L."/>
            <person name="Radune D."/>
            <person name="Dimitrov G."/>
            <person name="Hance M."/>
            <person name="Tran K."/>
            <person name="Khouri H.M."/>
            <person name="Gill J."/>
            <person name="Utterback T.R."/>
            <person name="Feldblyum T.V."/>
            <person name="Wall J.D."/>
            <person name="Voordouw G."/>
            <person name="Fraser C.M."/>
        </authorList>
    </citation>
    <scope>NUCLEOTIDE SEQUENCE [LARGE SCALE GENOMIC DNA]</scope>
    <source>
        <strain>ATCC 29579 / DSM 644 / CCUG 34227 / NCIMB 8303 / VKM B-1760 / Hildenborough</strain>
    </source>
</reference>
<dbReference type="EMBL" id="AE017285">
    <property type="protein sequence ID" value="AAS95791.1"/>
    <property type="molecule type" value="Genomic_DNA"/>
</dbReference>
<dbReference type="RefSeq" id="WP_010938608.1">
    <property type="nucleotide sequence ID" value="NC_002937.3"/>
</dbReference>
<dbReference type="RefSeq" id="YP_010532.1">
    <property type="nucleotide sequence ID" value="NC_002937.3"/>
</dbReference>
<dbReference type="SMR" id="Q72CH0"/>
<dbReference type="STRING" id="882.DVU_1313"/>
<dbReference type="PaxDb" id="882-DVU_1313"/>
<dbReference type="EnsemblBacteria" id="AAS95791">
    <property type="protein sequence ID" value="AAS95791"/>
    <property type="gene ID" value="DVU_1313"/>
</dbReference>
<dbReference type="KEGG" id="dvu:DVU_1313"/>
<dbReference type="PATRIC" id="fig|882.5.peg.1225"/>
<dbReference type="eggNOG" id="COG0093">
    <property type="taxonomic scope" value="Bacteria"/>
</dbReference>
<dbReference type="HOGENOM" id="CLU_095071_2_1_7"/>
<dbReference type="OrthoDB" id="9806379at2"/>
<dbReference type="PhylomeDB" id="Q72CH0"/>
<dbReference type="Proteomes" id="UP000002194">
    <property type="component" value="Chromosome"/>
</dbReference>
<dbReference type="GO" id="GO:0022625">
    <property type="term" value="C:cytosolic large ribosomal subunit"/>
    <property type="evidence" value="ECO:0007669"/>
    <property type="project" value="TreeGrafter"/>
</dbReference>
<dbReference type="GO" id="GO:0070180">
    <property type="term" value="F:large ribosomal subunit rRNA binding"/>
    <property type="evidence" value="ECO:0007669"/>
    <property type="project" value="TreeGrafter"/>
</dbReference>
<dbReference type="GO" id="GO:0003735">
    <property type="term" value="F:structural constituent of ribosome"/>
    <property type="evidence" value="ECO:0007669"/>
    <property type="project" value="InterPro"/>
</dbReference>
<dbReference type="GO" id="GO:0006412">
    <property type="term" value="P:translation"/>
    <property type="evidence" value="ECO:0007669"/>
    <property type="project" value="UniProtKB-UniRule"/>
</dbReference>
<dbReference type="CDD" id="cd00337">
    <property type="entry name" value="Ribosomal_uL14"/>
    <property type="match status" value="1"/>
</dbReference>
<dbReference type="FunFam" id="2.40.150.20:FF:000001">
    <property type="entry name" value="50S ribosomal protein L14"/>
    <property type="match status" value="1"/>
</dbReference>
<dbReference type="Gene3D" id="2.40.150.20">
    <property type="entry name" value="Ribosomal protein L14"/>
    <property type="match status" value="1"/>
</dbReference>
<dbReference type="HAMAP" id="MF_01367">
    <property type="entry name" value="Ribosomal_uL14"/>
    <property type="match status" value="1"/>
</dbReference>
<dbReference type="InterPro" id="IPR000218">
    <property type="entry name" value="Ribosomal_uL14"/>
</dbReference>
<dbReference type="InterPro" id="IPR005745">
    <property type="entry name" value="Ribosomal_uL14_bac-type"/>
</dbReference>
<dbReference type="InterPro" id="IPR019972">
    <property type="entry name" value="Ribosomal_uL14_CS"/>
</dbReference>
<dbReference type="InterPro" id="IPR036853">
    <property type="entry name" value="Ribosomal_uL14_sf"/>
</dbReference>
<dbReference type="NCBIfam" id="TIGR01067">
    <property type="entry name" value="rplN_bact"/>
    <property type="match status" value="1"/>
</dbReference>
<dbReference type="PANTHER" id="PTHR11761">
    <property type="entry name" value="50S/60S RIBOSOMAL PROTEIN L14/L23"/>
    <property type="match status" value="1"/>
</dbReference>
<dbReference type="PANTHER" id="PTHR11761:SF3">
    <property type="entry name" value="LARGE RIBOSOMAL SUBUNIT PROTEIN UL14M"/>
    <property type="match status" value="1"/>
</dbReference>
<dbReference type="Pfam" id="PF00238">
    <property type="entry name" value="Ribosomal_L14"/>
    <property type="match status" value="1"/>
</dbReference>
<dbReference type="SMART" id="SM01374">
    <property type="entry name" value="Ribosomal_L14"/>
    <property type="match status" value="1"/>
</dbReference>
<dbReference type="SUPFAM" id="SSF50193">
    <property type="entry name" value="Ribosomal protein L14"/>
    <property type="match status" value="1"/>
</dbReference>
<dbReference type="PROSITE" id="PS00049">
    <property type="entry name" value="RIBOSOMAL_L14"/>
    <property type="match status" value="1"/>
</dbReference>
<sequence length="122" mass="13280">MIQVESTLQVADNSGAKKVACIKVLGGSHRRYATVGDIIMVSVKEAMPHCKVKKGDVMQAVIVRTAKEVRRADGSYIKFDSNAAVLLNKQGEPVGTRIFGPVARELRARNFMKIVSLAPEVL</sequence>
<keyword id="KW-1185">Reference proteome</keyword>
<keyword id="KW-0687">Ribonucleoprotein</keyword>
<keyword id="KW-0689">Ribosomal protein</keyword>
<keyword id="KW-0694">RNA-binding</keyword>
<keyword id="KW-0699">rRNA-binding</keyword>
<feature type="chain" id="PRO_0000266479" description="Large ribosomal subunit protein uL14">
    <location>
        <begin position="1"/>
        <end position="122"/>
    </location>
</feature>
<comment type="function">
    <text evidence="1">Binds to 23S rRNA. Forms part of two intersubunit bridges in the 70S ribosome.</text>
</comment>
<comment type="subunit">
    <text evidence="1">Part of the 50S ribosomal subunit. Forms a cluster with proteins L3 and L19. In the 70S ribosome, L14 and L19 interact and together make contacts with the 16S rRNA in bridges B5 and B8.</text>
</comment>
<comment type="similarity">
    <text evidence="1">Belongs to the universal ribosomal protein uL14 family.</text>
</comment>
<organism>
    <name type="scientific">Nitratidesulfovibrio vulgaris (strain ATCC 29579 / DSM 644 / CCUG 34227 / NCIMB 8303 / VKM B-1760 / Hildenborough)</name>
    <name type="common">Desulfovibrio vulgaris</name>
    <dbReference type="NCBI Taxonomy" id="882"/>
    <lineage>
        <taxon>Bacteria</taxon>
        <taxon>Pseudomonadati</taxon>
        <taxon>Thermodesulfobacteriota</taxon>
        <taxon>Desulfovibrionia</taxon>
        <taxon>Desulfovibrionales</taxon>
        <taxon>Desulfovibrionaceae</taxon>
        <taxon>Nitratidesulfovibrio</taxon>
    </lineage>
</organism>
<name>RL14_NITV2</name>
<gene>
    <name evidence="1" type="primary">rplN</name>
    <name type="ordered locus">DVU_1313</name>
</gene>